<feature type="chain" id="PRO_1000009520" description="tRNA-specific 2-thiouridylase MnmA">
    <location>
        <begin position="1"/>
        <end position="395"/>
    </location>
</feature>
<feature type="region of interest" description="Interaction with tRNA" evidence="1">
    <location>
        <begin position="143"/>
        <end position="145"/>
    </location>
</feature>
<feature type="active site" description="Nucleophile" evidence="1">
    <location>
        <position position="101"/>
    </location>
</feature>
<feature type="active site" description="Cysteine persulfide intermediate" evidence="1">
    <location>
        <position position="193"/>
    </location>
</feature>
<feature type="binding site" evidence="1">
    <location>
        <begin position="6"/>
        <end position="13"/>
    </location>
    <ligand>
        <name>ATP</name>
        <dbReference type="ChEBI" id="CHEBI:30616"/>
    </ligand>
</feature>
<feature type="binding site" evidence="1">
    <location>
        <position position="32"/>
    </location>
    <ligand>
        <name>ATP</name>
        <dbReference type="ChEBI" id="CHEBI:30616"/>
    </ligand>
</feature>
<feature type="binding site" evidence="1">
    <location>
        <position position="125"/>
    </location>
    <ligand>
        <name>ATP</name>
        <dbReference type="ChEBI" id="CHEBI:30616"/>
    </ligand>
</feature>
<feature type="site" description="Interaction with tRNA" evidence="1">
    <location>
        <position position="126"/>
    </location>
</feature>
<feature type="site" description="Interaction with tRNA" evidence="1">
    <location>
        <position position="351"/>
    </location>
</feature>
<feature type="disulfide bond" description="Alternate" evidence="1">
    <location>
        <begin position="101"/>
        <end position="193"/>
    </location>
</feature>
<keyword id="KW-0067">ATP-binding</keyword>
<keyword id="KW-0963">Cytoplasm</keyword>
<keyword id="KW-1015">Disulfide bond</keyword>
<keyword id="KW-0547">Nucleotide-binding</keyword>
<keyword id="KW-1185">Reference proteome</keyword>
<keyword id="KW-0694">RNA-binding</keyword>
<keyword id="KW-0808">Transferase</keyword>
<keyword id="KW-0819">tRNA processing</keyword>
<keyword id="KW-0820">tRNA-binding</keyword>
<evidence type="ECO:0000255" key="1">
    <source>
        <dbReference type="HAMAP-Rule" id="MF_00144"/>
    </source>
</evidence>
<comment type="function">
    <text evidence="1">Catalyzes the 2-thiolation of uridine at the wobble position (U34) of tRNA, leading to the formation of s(2)U34.</text>
</comment>
<comment type="catalytic activity">
    <reaction evidence="1">
        <text>S-sulfanyl-L-cysteinyl-[protein] + uridine(34) in tRNA + AH2 + ATP = 2-thiouridine(34) in tRNA + L-cysteinyl-[protein] + A + AMP + diphosphate + H(+)</text>
        <dbReference type="Rhea" id="RHEA:47032"/>
        <dbReference type="Rhea" id="RHEA-COMP:10131"/>
        <dbReference type="Rhea" id="RHEA-COMP:11726"/>
        <dbReference type="Rhea" id="RHEA-COMP:11727"/>
        <dbReference type="Rhea" id="RHEA-COMP:11728"/>
        <dbReference type="ChEBI" id="CHEBI:13193"/>
        <dbReference type="ChEBI" id="CHEBI:15378"/>
        <dbReference type="ChEBI" id="CHEBI:17499"/>
        <dbReference type="ChEBI" id="CHEBI:29950"/>
        <dbReference type="ChEBI" id="CHEBI:30616"/>
        <dbReference type="ChEBI" id="CHEBI:33019"/>
        <dbReference type="ChEBI" id="CHEBI:61963"/>
        <dbReference type="ChEBI" id="CHEBI:65315"/>
        <dbReference type="ChEBI" id="CHEBI:87170"/>
        <dbReference type="ChEBI" id="CHEBI:456215"/>
        <dbReference type="EC" id="2.8.1.13"/>
    </reaction>
</comment>
<comment type="subcellular location">
    <subcellularLocation>
        <location evidence="1">Cytoplasm</location>
    </subcellularLocation>
</comment>
<comment type="similarity">
    <text evidence="1">Belongs to the MnmA/TRMU family.</text>
</comment>
<organism>
    <name type="scientific">Corynebacterium jeikeium (strain K411)</name>
    <dbReference type="NCBI Taxonomy" id="306537"/>
    <lineage>
        <taxon>Bacteria</taxon>
        <taxon>Bacillati</taxon>
        <taxon>Actinomycetota</taxon>
        <taxon>Actinomycetes</taxon>
        <taxon>Mycobacteriales</taxon>
        <taxon>Corynebacteriaceae</taxon>
        <taxon>Corynebacterium</taxon>
    </lineage>
</organism>
<accession>Q4JUL5</accession>
<gene>
    <name evidence="1" type="primary">mnmA</name>
    <name type="synonym">trmU</name>
    <name type="ordered locus">jk1320</name>
</gene>
<reference key="1">
    <citation type="journal article" date="2005" name="J. Bacteriol.">
        <title>Complete genome sequence and analysis of the multiresistant nosocomial pathogen Corynebacterium jeikeium K411, a lipid-requiring bacterium of the human skin flora.</title>
        <authorList>
            <person name="Tauch A."/>
            <person name="Kaiser O."/>
            <person name="Hain T."/>
            <person name="Goesmann A."/>
            <person name="Weisshaar B."/>
            <person name="Albersmeier A."/>
            <person name="Bekel T."/>
            <person name="Bischoff N."/>
            <person name="Brune I."/>
            <person name="Chakraborty T."/>
            <person name="Kalinowski J."/>
            <person name="Meyer F."/>
            <person name="Rupp O."/>
            <person name="Schneiker S."/>
            <person name="Viehoever P."/>
            <person name="Puehler A."/>
        </authorList>
    </citation>
    <scope>NUCLEOTIDE SEQUENCE [LARGE SCALE GENOMIC DNA]</scope>
    <source>
        <strain>K411</strain>
    </source>
</reference>
<protein>
    <recommendedName>
        <fullName evidence="1">tRNA-specific 2-thiouridylase MnmA</fullName>
        <ecNumber evidence="1">2.8.1.13</ecNumber>
    </recommendedName>
</protein>
<sequence length="395" mass="42232">MRVVAAMSGGVDSAVAASRALEAGHEVIGVHLALSQSPEAVRAGSRGCCSLEDSADARRVADKLGIPFYVWDFSDRFKADVIDDFVDSYAIGETPNPCLRCNEKIKFEALLDRSIALGFDAVVTGHYARLHDGVMRRGVDANKDQSYVLGVLTDEQLAHCMFPVGDTIKPEIREEAKDHGFGVASKPDSHDICFIPDGQTQAFLGKKIGLRPGLMKDQDGSTVAEHDGVYGFTIGQRKGLGLPREGLDGKPRYVTDIDAATGTVTIGQRDDLRVGGITADRLKRLDPAVHGREFECEVQVRAHGGVVPATARLVDDPERTTPAGRVKKEDESPWRLELDLHEPLQGVARGQAAVVYQPDADGDILLGSGTIRATAPWSDAGAAGTAGERATPAEA</sequence>
<proteinExistence type="inferred from homology"/>
<dbReference type="EC" id="2.8.1.13" evidence="1"/>
<dbReference type="EMBL" id="CR931997">
    <property type="protein sequence ID" value="CAI37492.1"/>
    <property type="molecule type" value="Genomic_DNA"/>
</dbReference>
<dbReference type="RefSeq" id="WP_011273808.1">
    <property type="nucleotide sequence ID" value="NC_007164.1"/>
</dbReference>
<dbReference type="SMR" id="Q4JUL5"/>
<dbReference type="STRING" id="306537.jk1320"/>
<dbReference type="KEGG" id="cjk:jk1320"/>
<dbReference type="PATRIC" id="fig|306537.10.peg.1340"/>
<dbReference type="eggNOG" id="COG0482">
    <property type="taxonomic scope" value="Bacteria"/>
</dbReference>
<dbReference type="HOGENOM" id="CLU_035188_0_2_11"/>
<dbReference type="OrthoDB" id="9800696at2"/>
<dbReference type="Proteomes" id="UP000000545">
    <property type="component" value="Chromosome"/>
</dbReference>
<dbReference type="GO" id="GO:0005737">
    <property type="term" value="C:cytoplasm"/>
    <property type="evidence" value="ECO:0007669"/>
    <property type="project" value="UniProtKB-SubCell"/>
</dbReference>
<dbReference type="GO" id="GO:0005524">
    <property type="term" value="F:ATP binding"/>
    <property type="evidence" value="ECO:0007669"/>
    <property type="project" value="UniProtKB-KW"/>
</dbReference>
<dbReference type="GO" id="GO:0000049">
    <property type="term" value="F:tRNA binding"/>
    <property type="evidence" value="ECO:0007669"/>
    <property type="project" value="UniProtKB-KW"/>
</dbReference>
<dbReference type="GO" id="GO:0103016">
    <property type="term" value="F:tRNA-uridine 2-sulfurtransferase activity"/>
    <property type="evidence" value="ECO:0007669"/>
    <property type="project" value="UniProtKB-EC"/>
</dbReference>
<dbReference type="GO" id="GO:0002143">
    <property type="term" value="P:tRNA wobble position uridine thiolation"/>
    <property type="evidence" value="ECO:0007669"/>
    <property type="project" value="TreeGrafter"/>
</dbReference>
<dbReference type="CDD" id="cd01998">
    <property type="entry name" value="MnmA_TRMU-like"/>
    <property type="match status" value="1"/>
</dbReference>
<dbReference type="FunFam" id="3.40.50.620:FF:000057">
    <property type="entry name" value="tRNA-specific 2-thiouridylase MnmA"/>
    <property type="match status" value="1"/>
</dbReference>
<dbReference type="Gene3D" id="2.30.30.280">
    <property type="entry name" value="Adenine nucleotide alpha hydrolases-like domains"/>
    <property type="match status" value="1"/>
</dbReference>
<dbReference type="Gene3D" id="3.40.50.620">
    <property type="entry name" value="HUPs"/>
    <property type="match status" value="1"/>
</dbReference>
<dbReference type="Gene3D" id="2.40.30.10">
    <property type="entry name" value="Translation factors"/>
    <property type="match status" value="1"/>
</dbReference>
<dbReference type="HAMAP" id="MF_00144">
    <property type="entry name" value="tRNA_thiouridyl_MnmA"/>
    <property type="match status" value="1"/>
</dbReference>
<dbReference type="InterPro" id="IPR004506">
    <property type="entry name" value="MnmA-like"/>
</dbReference>
<dbReference type="InterPro" id="IPR046885">
    <property type="entry name" value="MnmA-like_C"/>
</dbReference>
<dbReference type="InterPro" id="IPR046884">
    <property type="entry name" value="MnmA-like_central"/>
</dbReference>
<dbReference type="InterPro" id="IPR023382">
    <property type="entry name" value="MnmA-like_central_sf"/>
</dbReference>
<dbReference type="InterPro" id="IPR014729">
    <property type="entry name" value="Rossmann-like_a/b/a_fold"/>
</dbReference>
<dbReference type="NCBIfam" id="NF001138">
    <property type="entry name" value="PRK00143.1"/>
    <property type="match status" value="1"/>
</dbReference>
<dbReference type="NCBIfam" id="TIGR00420">
    <property type="entry name" value="trmU"/>
    <property type="match status" value="1"/>
</dbReference>
<dbReference type="PANTHER" id="PTHR11933:SF5">
    <property type="entry name" value="MITOCHONDRIAL TRNA-SPECIFIC 2-THIOURIDYLASE 1"/>
    <property type="match status" value="1"/>
</dbReference>
<dbReference type="PANTHER" id="PTHR11933">
    <property type="entry name" value="TRNA 5-METHYLAMINOMETHYL-2-THIOURIDYLATE -METHYLTRANSFERASE"/>
    <property type="match status" value="1"/>
</dbReference>
<dbReference type="Pfam" id="PF03054">
    <property type="entry name" value="tRNA_Me_trans"/>
    <property type="match status" value="1"/>
</dbReference>
<dbReference type="Pfam" id="PF20258">
    <property type="entry name" value="tRNA_Me_trans_C"/>
    <property type="match status" value="1"/>
</dbReference>
<dbReference type="Pfam" id="PF20259">
    <property type="entry name" value="tRNA_Me_trans_M"/>
    <property type="match status" value="1"/>
</dbReference>
<dbReference type="SUPFAM" id="SSF52402">
    <property type="entry name" value="Adenine nucleotide alpha hydrolases-like"/>
    <property type="match status" value="1"/>
</dbReference>
<name>MNMA_CORJK</name>